<accession>Q07UQ9</accession>
<dbReference type="EC" id="4.3.2.10" evidence="1"/>
<dbReference type="EMBL" id="CP000463">
    <property type="protein sequence ID" value="ABJ04325.1"/>
    <property type="molecule type" value="Genomic_DNA"/>
</dbReference>
<dbReference type="SMR" id="Q07UQ9"/>
<dbReference type="STRING" id="316055.RPE_0366"/>
<dbReference type="KEGG" id="rpe:RPE_0366"/>
<dbReference type="eggNOG" id="COG0107">
    <property type="taxonomic scope" value="Bacteria"/>
</dbReference>
<dbReference type="HOGENOM" id="CLU_048577_4_0_5"/>
<dbReference type="OrthoDB" id="9781903at2"/>
<dbReference type="UniPathway" id="UPA00031">
    <property type="reaction ID" value="UER00010"/>
</dbReference>
<dbReference type="GO" id="GO:0005737">
    <property type="term" value="C:cytoplasm"/>
    <property type="evidence" value="ECO:0007669"/>
    <property type="project" value="UniProtKB-SubCell"/>
</dbReference>
<dbReference type="GO" id="GO:0000107">
    <property type="term" value="F:imidazoleglycerol-phosphate synthase activity"/>
    <property type="evidence" value="ECO:0007669"/>
    <property type="project" value="UniProtKB-UniRule"/>
</dbReference>
<dbReference type="GO" id="GO:0016829">
    <property type="term" value="F:lyase activity"/>
    <property type="evidence" value="ECO:0007669"/>
    <property type="project" value="UniProtKB-KW"/>
</dbReference>
<dbReference type="GO" id="GO:0000105">
    <property type="term" value="P:L-histidine biosynthetic process"/>
    <property type="evidence" value="ECO:0007669"/>
    <property type="project" value="UniProtKB-UniRule"/>
</dbReference>
<dbReference type="CDD" id="cd04731">
    <property type="entry name" value="HisF"/>
    <property type="match status" value="1"/>
</dbReference>
<dbReference type="FunFam" id="3.20.20.70:FF:000006">
    <property type="entry name" value="Imidazole glycerol phosphate synthase subunit HisF"/>
    <property type="match status" value="1"/>
</dbReference>
<dbReference type="Gene3D" id="3.20.20.70">
    <property type="entry name" value="Aldolase class I"/>
    <property type="match status" value="1"/>
</dbReference>
<dbReference type="HAMAP" id="MF_01013">
    <property type="entry name" value="HisF"/>
    <property type="match status" value="1"/>
</dbReference>
<dbReference type="InterPro" id="IPR013785">
    <property type="entry name" value="Aldolase_TIM"/>
</dbReference>
<dbReference type="InterPro" id="IPR006062">
    <property type="entry name" value="His_biosynth"/>
</dbReference>
<dbReference type="InterPro" id="IPR004651">
    <property type="entry name" value="HisF"/>
</dbReference>
<dbReference type="InterPro" id="IPR050064">
    <property type="entry name" value="IGPS_HisA/HisF"/>
</dbReference>
<dbReference type="InterPro" id="IPR011060">
    <property type="entry name" value="RibuloseP-bd_barrel"/>
</dbReference>
<dbReference type="NCBIfam" id="TIGR00735">
    <property type="entry name" value="hisF"/>
    <property type="match status" value="1"/>
</dbReference>
<dbReference type="PANTHER" id="PTHR21235:SF2">
    <property type="entry name" value="IMIDAZOLE GLYCEROL PHOSPHATE SYNTHASE HISHF"/>
    <property type="match status" value="1"/>
</dbReference>
<dbReference type="PANTHER" id="PTHR21235">
    <property type="entry name" value="IMIDAZOLE GLYCEROL PHOSPHATE SYNTHASE SUBUNIT HISF/H IGP SYNTHASE SUBUNIT HISF/H"/>
    <property type="match status" value="1"/>
</dbReference>
<dbReference type="Pfam" id="PF00977">
    <property type="entry name" value="His_biosynth"/>
    <property type="match status" value="1"/>
</dbReference>
<dbReference type="SUPFAM" id="SSF51366">
    <property type="entry name" value="Ribulose-phoshate binding barrel"/>
    <property type="match status" value="1"/>
</dbReference>
<protein>
    <recommendedName>
        <fullName evidence="1">Imidazole glycerol phosphate synthase subunit HisF</fullName>
        <ecNumber evidence="1">4.3.2.10</ecNumber>
    </recommendedName>
    <alternativeName>
        <fullName evidence="1">IGP synthase cyclase subunit</fullName>
    </alternativeName>
    <alternativeName>
        <fullName evidence="1">IGP synthase subunit HisF</fullName>
    </alternativeName>
    <alternativeName>
        <fullName evidence="1">ImGP synthase subunit HisF</fullName>
        <shortName evidence="1">IGPS subunit HisF</shortName>
    </alternativeName>
</protein>
<feature type="chain" id="PRO_1000063129" description="Imidazole glycerol phosphate synthase subunit HisF">
    <location>
        <begin position="1"/>
        <end position="255"/>
    </location>
</feature>
<feature type="active site" evidence="1">
    <location>
        <position position="11"/>
    </location>
</feature>
<feature type="active site" evidence="1">
    <location>
        <position position="130"/>
    </location>
</feature>
<evidence type="ECO:0000255" key="1">
    <source>
        <dbReference type="HAMAP-Rule" id="MF_01013"/>
    </source>
</evidence>
<comment type="function">
    <text evidence="1">IGPS catalyzes the conversion of PRFAR and glutamine to IGP, AICAR and glutamate. The HisF subunit catalyzes the cyclization activity that produces IGP and AICAR from PRFAR using the ammonia provided by the HisH subunit.</text>
</comment>
<comment type="catalytic activity">
    <reaction evidence="1">
        <text>5-[(5-phospho-1-deoxy-D-ribulos-1-ylimino)methylamino]-1-(5-phospho-beta-D-ribosyl)imidazole-4-carboxamide + L-glutamine = D-erythro-1-(imidazol-4-yl)glycerol 3-phosphate + 5-amino-1-(5-phospho-beta-D-ribosyl)imidazole-4-carboxamide + L-glutamate + H(+)</text>
        <dbReference type="Rhea" id="RHEA:24793"/>
        <dbReference type="ChEBI" id="CHEBI:15378"/>
        <dbReference type="ChEBI" id="CHEBI:29985"/>
        <dbReference type="ChEBI" id="CHEBI:58278"/>
        <dbReference type="ChEBI" id="CHEBI:58359"/>
        <dbReference type="ChEBI" id="CHEBI:58475"/>
        <dbReference type="ChEBI" id="CHEBI:58525"/>
        <dbReference type="EC" id="4.3.2.10"/>
    </reaction>
</comment>
<comment type="pathway">
    <text evidence="1">Amino-acid biosynthesis; L-histidine biosynthesis; L-histidine from 5-phospho-alpha-D-ribose 1-diphosphate: step 5/9.</text>
</comment>
<comment type="subunit">
    <text evidence="1">Heterodimer of HisH and HisF.</text>
</comment>
<comment type="subcellular location">
    <subcellularLocation>
        <location evidence="1">Cytoplasm</location>
    </subcellularLocation>
</comment>
<comment type="similarity">
    <text evidence="1">Belongs to the HisA/HisF family.</text>
</comment>
<sequence length="255" mass="27253">MFKVRVIPCLDVKDGRVVKGINFVDLRDAGDPVEAAIAYDAAGADELTFLDITATHENRGIMLDVVRRTAEACFMPLTVGGGVRTVDDIKTLLRSGADKVSINSAAVARREFVKEAAEKFGEQCIVVAIDAKRVPGKDRWEIFTHGGRKGTGIDAIDYAQEVVSLGAGEILLTSMDRDGTRQGFDIPLTSAIADSVPVPVIASGGVGNLDHLVEGIAKGHATAVLAASIFHFGEFTIRQAKEHMVRSGLPMRLDP</sequence>
<reference key="1">
    <citation type="submission" date="2006-09" db="EMBL/GenBank/DDBJ databases">
        <title>Complete sequence of Rhodopseudomonas palustris BisA53.</title>
        <authorList>
            <consortium name="US DOE Joint Genome Institute"/>
            <person name="Copeland A."/>
            <person name="Lucas S."/>
            <person name="Lapidus A."/>
            <person name="Barry K."/>
            <person name="Detter J.C."/>
            <person name="Glavina del Rio T."/>
            <person name="Hammon N."/>
            <person name="Israni S."/>
            <person name="Dalin E."/>
            <person name="Tice H."/>
            <person name="Pitluck S."/>
            <person name="Chain P."/>
            <person name="Malfatti S."/>
            <person name="Shin M."/>
            <person name="Vergez L."/>
            <person name="Schmutz J."/>
            <person name="Larimer F."/>
            <person name="Land M."/>
            <person name="Hauser L."/>
            <person name="Pelletier D.A."/>
            <person name="Kyrpides N."/>
            <person name="Kim E."/>
            <person name="Harwood C.S."/>
            <person name="Oda Y."/>
            <person name="Richardson P."/>
        </authorList>
    </citation>
    <scope>NUCLEOTIDE SEQUENCE [LARGE SCALE GENOMIC DNA]</scope>
    <source>
        <strain>BisA53</strain>
    </source>
</reference>
<keyword id="KW-0028">Amino-acid biosynthesis</keyword>
<keyword id="KW-0963">Cytoplasm</keyword>
<keyword id="KW-0368">Histidine biosynthesis</keyword>
<keyword id="KW-0456">Lyase</keyword>
<proteinExistence type="inferred from homology"/>
<name>HIS6_RHOP5</name>
<gene>
    <name evidence="1" type="primary">hisF</name>
    <name type="ordered locus">RPE_0366</name>
</gene>
<organism>
    <name type="scientific">Rhodopseudomonas palustris (strain BisA53)</name>
    <dbReference type="NCBI Taxonomy" id="316055"/>
    <lineage>
        <taxon>Bacteria</taxon>
        <taxon>Pseudomonadati</taxon>
        <taxon>Pseudomonadota</taxon>
        <taxon>Alphaproteobacteria</taxon>
        <taxon>Hyphomicrobiales</taxon>
        <taxon>Nitrobacteraceae</taxon>
        <taxon>Rhodopseudomonas</taxon>
    </lineage>
</organism>